<keyword id="KW-0025">Alternative splicing</keyword>
<keyword id="KW-0325">Glycoprotein</keyword>
<keyword id="KW-1185">Reference proteome</keyword>
<keyword id="KW-0732">Signal</keyword>
<protein>
    <recommendedName>
        <fullName>Putative BPI/LBP family protein At1g04970</fullName>
    </recommendedName>
</protein>
<name>Y1049_ARATH</name>
<evidence type="ECO:0000255" key="1"/>
<evidence type="ECO:0000305" key="2"/>
<comment type="alternative products">
    <event type="alternative splicing"/>
    <isoform>
        <id>Q9MAU5-1</id>
        <name>1</name>
        <sequence type="displayed"/>
    </isoform>
    <text>A number of isoforms are produced. According to EST sequences.</text>
</comment>
<comment type="similarity">
    <text evidence="2">Belongs to the BPI/LBP/Plunc superfamily. BPI/LBP (TC 1.C.40) family.</text>
</comment>
<dbReference type="EMBL" id="AC004809">
    <property type="protein sequence ID" value="AAF40464.1"/>
    <property type="molecule type" value="Genomic_DNA"/>
</dbReference>
<dbReference type="EMBL" id="CP002684">
    <property type="protein sequence ID" value="AEE27771.1"/>
    <property type="molecule type" value="Genomic_DNA"/>
</dbReference>
<dbReference type="EMBL" id="BT004276">
    <property type="protein sequence ID" value="AAO42277.1"/>
    <property type="molecule type" value="mRNA"/>
</dbReference>
<dbReference type="EMBL" id="BT005587">
    <property type="protein sequence ID" value="AAO64007.1"/>
    <property type="molecule type" value="mRNA"/>
</dbReference>
<dbReference type="EMBL" id="AY087735">
    <property type="protein sequence ID" value="AAM65272.1"/>
    <property type="molecule type" value="mRNA"/>
</dbReference>
<dbReference type="PIR" id="C86183">
    <property type="entry name" value="C86183"/>
</dbReference>
<dbReference type="RefSeq" id="NP_563724.1">
    <molecule id="Q9MAU5-1"/>
    <property type="nucleotide sequence ID" value="NM_100375.4"/>
</dbReference>
<dbReference type="SMR" id="Q9MAU5"/>
<dbReference type="BioGRID" id="24592">
    <property type="interactions" value="2"/>
</dbReference>
<dbReference type="FunCoup" id="Q9MAU5">
    <property type="interactions" value="1005"/>
</dbReference>
<dbReference type="IntAct" id="Q9MAU5">
    <property type="interactions" value="2"/>
</dbReference>
<dbReference type="STRING" id="3702.Q9MAU5"/>
<dbReference type="GlyGen" id="Q9MAU5">
    <property type="glycosylation" value="5 sites"/>
</dbReference>
<dbReference type="PaxDb" id="3702-AT1G04970.1"/>
<dbReference type="ProteomicsDB" id="243175">
    <molecule id="Q9MAU5-1"/>
</dbReference>
<dbReference type="DNASU" id="839357"/>
<dbReference type="EnsemblPlants" id="AT1G04970.1">
    <molecule id="Q9MAU5-1"/>
    <property type="protein sequence ID" value="AT1G04970.1"/>
    <property type="gene ID" value="AT1G04970"/>
</dbReference>
<dbReference type="GeneID" id="839357"/>
<dbReference type="Gramene" id="AT1G04970.1">
    <molecule id="Q9MAU5-1"/>
    <property type="protein sequence ID" value="AT1G04970.1"/>
    <property type="gene ID" value="AT1G04970"/>
</dbReference>
<dbReference type="KEGG" id="ath:AT1G04970"/>
<dbReference type="Araport" id="AT1G04970"/>
<dbReference type="TAIR" id="AT1G04970">
    <property type="gene designation" value="LBR-1"/>
</dbReference>
<dbReference type="eggNOG" id="KOG4160">
    <property type="taxonomic scope" value="Eukaryota"/>
</dbReference>
<dbReference type="HOGENOM" id="CLU_028970_0_0_1"/>
<dbReference type="InParanoid" id="Q9MAU5"/>
<dbReference type="OMA" id="WKARKRF"/>
<dbReference type="PhylomeDB" id="Q9MAU5"/>
<dbReference type="PRO" id="PR:Q9MAU5"/>
<dbReference type="Proteomes" id="UP000006548">
    <property type="component" value="Chromosome 1"/>
</dbReference>
<dbReference type="ExpressionAtlas" id="Q9MAU5">
    <property type="expression patterns" value="baseline and differential"/>
</dbReference>
<dbReference type="GO" id="GO:0005615">
    <property type="term" value="C:extracellular space"/>
    <property type="evidence" value="ECO:0007669"/>
    <property type="project" value="InterPro"/>
</dbReference>
<dbReference type="GO" id="GO:0000325">
    <property type="term" value="C:plant-type vacuole"/>
    <property type="evidence" value="ECO:0007005"/>
    <property type="project" value="TAIR"/>
</dbReference>
<dbReference type="GO" id="GO:0001530">
    <property type="term" value="F:lipopolysaccharide binding"/>
    <property type="evidence" value="ECO:0000314"/>
    <property type="project" value="TAIR"/>
</dbReference>
<dbReference type="GO" id="GO:1903409">
    <property type="term" value="P:reactive oxygen species biosynthetic process"/>
    <property type="evidence" value="ECO:0000315"/>
    <property type="project" value="TAIR"/>
</dbReference>
<dbReference type="GO" id="GO:0010468">
    <property type="term" value="P:regulation of gene expression"/>
    <property type="evidence" value="ECO:0000315"/>
    <property type="project" value="TAIR"/>
</dbReference>
<dbReference type="CDD" id="cd00025">
    <property type="entry name" value="BPI1"/>
    <property type="match status" value="1"/>
</dbReference>
<dbReference type="CDD" id="cd00026">
    <property type="entry name" value="BPI2"/>
    <property type="match status" value="1"/>
</dbReference>
<dbReference type="FunFam" id="3.15.10.10:FF:000001">
    <property type="entry name" value="phospholipid transfer protein-like"/>
    <property type="match status" value="1"/>
</dbReference>
<dbReference type="Gene3D" id="3.15.10.10">
    <property type="entry name" value="Bactericidal permeability-increasing protein, domain 1"/>
    <property type="match status" value="1"/>
</dbReference>
<dbReference type="Gene3D" id="3.15.20.10">
    <property type="entry name" value="Bactericidal permeability-increasing protein, domain 2"/>
    <property type="match status" value="1"/>
</dbReference>
<dbReference type="InterPro" id="IPR017943">
    <property type="entry name" value="Bactericidal_perm-incr_a/b_dom"/>
</dbReference>
<dbReference type="InterPro" id="IPR030675">
    <property type="entry name" value="BPI/LBP"/>
</dbReference>
<dbReference type="InterPro" id="IPR045897">
    <property type="entry name" value="BPI/LBP_pln"/>
</dbReference>
<dbReference type="InterPro" id="IPR001124">
    <property type="entry name" value="Lipid-bd_serum_glycop_C"/>
</dbReference>
<dbReference type="InterPro" id="IPR017942">
    <property type="entry name" value="Lipid-bd_serum_glycop_N"/>
</dbReference>
<dbReference type="PANTHER" id="PTHR46801:SF6">
    <property type="entry name" value="LIPID-BINDING SERUM GLYCOPROTEIN C-TERMINAL DOMAIN-CONTAINING PROTEIN"/>
    <property type="match status" value="1"/>
</dbReference>
<dbReference type="PANTHER" id="PTHR46801">
    <property type="entry name" value="OS06G0309200 PROTEIN"/>
    <property type="match status" value="1"/>
</dbReference>
<dbReference type="Pfam" id="PF01273">
    <property type="entry name" value="LBP_BPI_CETP"/>
    <property type="match status" value="1"/>
</dbReference>
<dbReference type="Pfam" id="PF02886">
    <property type="entry name" value="LBP_BPI_CETP_C"/>
    <property type="match status" value="1"/>
</dbReference>
<dbReference type="PIRSF" id="PIRSF002417">
    <property type="entry name" value="Lipid_binding_protein"/>
    <property type="match status" value="1"/>
</dbReference>
<dbReference type="SMART" id="SM00328">
    <property type="entry name" value="BPI1"/>
    <property type="match status" value="1"/>
</dbReference>
<dbReference type="SMART" id="SM00329">
    <property type="entry name" value="BPI2"/>
    <property type="match status" value="1"/>
</dbReference>
<dbReference type="SUPFAM" id="SSF55394">
    <property type="entry name" value="Bactericidal permeability-increasing protein, BPI"/>
    <property type="match status" value="2"/>
</dbReference>
<reference key="1">
    <citation type="journal article" date="2000" name="Nature">
        <title>Sequence and analysis of chromosome 1 of the plant Arabidopsis thaliana.</title>
        <authorList>
            <person name="Theologis A."/>
            <person name="Ecker J.R."/>
            <person name="Palm C.J."/>
            <person name="Federspiel N.A."/>
            <person name="Kaul S."/>
            <person name="White O."/>
            <person name="Alonso J."/>
            <person name="Altafi H."/>
            <person name="Araujo R."/>
            <person name="Bowman C.L."/>
            <person name="Brooks S.Y."/>
            <person name="Buehler E."/>
            <person name="Chan A."/>
            <person name="Chao Q."/>
            <person name="Chen H."/>
            <person name="Cheuk R.F."/>
            <person name="Chin C.W."/>
            <person name="Chung M.K."/>
            <person name="Conn L."/>
            <person name="Conway A.B."/>
            <person name="Conway A.R."/>
            <person name="Creasy T.H."/>
            <person name="Dewar K."/>
            <person name="Dunn P."/>
            <person name="Etgu P."/>
            <person name="Feldblyum T.V."/>
            <person name="Feng J.-D."/>
            <person name="Fong B."/>
            <person name="Fujii C.Y."/>
            <person name="Gill J.E."/>
            <person name="Goldsmith A.D."/>
            <person name="Haas B."/>
            <person name="Hansen N.F."/>
            <person name="Hughes B."/>
            <person name="Huizar L."/>
            <person name="Hunter J.L."/>
            <person name="Jenkins J."/>
            <person name="Johnson-Hopson C."/>
            <person name="Khan S."/>
            <person name="Khaykin E."/>
            <person name="Kim C.J."/>
            <person name="Koo H.L."/>
            <person name="Kremenetskaia I."/>
            <person name="Kurtz D.B."/>
            <person name="Kwan A."/>
            <person name="Lam B."/>
            <person name="Langin-Hooper S."/>
            <person name="Lee A."/>
            <person name="Lee J.M."/>
            <person name="Lenz C.A."/>
            <person name="Li J.H."/>
            <person name="Li Y.-P."/>
            <person name="Lin X."/>
            <person name="Liu S.X."/>
            <person name="Liu Z.A."/>
            <person name="Luros J.S."/>
            <person name="Maiti R."/>
            <person name="Marziali A."/>
            <person name="Militscher J."/>
            <person name="Miranda M."/>
            <person name="Nguyen M."/>
            <person name="Nierman W.C."/>
            <person name="Osborne B.I."/>
            <person name="Pai G."/>
            <person name="Peterson J."/>
            <person name="Pham P.K."/>
            <person name="Rizzo M."/>
            <person name="Rooney T."/>
            <person name="Rowley D."/>
            <person name="Sakano H."/>
            <person name="Salzberg S.L."/>
            <person name="Schwartz J.R."/>
            <person name="Shinn P."/>
            <person name="Southwick A.M."/>
            <person name="Sun H."/>
            <person name="Tallon L.J."/>
            <person name="Tambunga G."/>
            <person name="Toriumi M.J."/>
            <person name="Town C.D."/>
            <person name="Utterback T."/>
            <person name="Van Aken S."/>
            <person name="Vaysberg M."/>
            <person name="Vysotskaia V.S."/>
            <person name="Walker M."/>
            <person name="Wu D."/>
            <person name="Yu G."/>
            <person name="Fraser C.M."/>
            <person name="Venter J.C."/>
            <person name="Davis R.W."/>
        </authorList>
    </citation>
    <scope>NUCLEOTIDE SEQUENCE [LARGE SCALE GENOMIC DNA]</scope>
    <source>
        <strain>cv. Columbia</strain>
    </source>
</reference>
<reference key="2">
    <citation type="journal article" date="2017" name="Plant J.">
        <title>Araport11: a complete reannotation of the Arabidopsis thaliana reference genome.</title>
        <authorList>
            <person name="Cheng C.Y."/>
            <person name="Krishnakumar V."/>
            <person name="Chan A.P."/>
            <person name="Thibaud-Nissen F."/>
            <person name="Schobel S."/>
            <person name="Town C.D."/>
        </authorList>
    </citation>
    <scope>GENOME REANNOTATION</scope>
    <source>
        <strain>cv. Columbia</strain>
    </source>
</reference>
<reference key="3">
    <citation type="journal article" date="2003" name="Science">
        <title>Empirical analysis of transcriptional activity in the Arabidopsis genome.</title>
        <authorList>
            <person name="Yamada K."/>
            <person name="Lim J."/>
            <person name="Dale J.M."/>
            <person name="Chen H."/>
            <person name="Shinn P."/>
            <person name="Palm C.J."/>
            <person name="Southwick A.M."/>
            <person name="Wu H.C."/>
            <person name="Kim C.J."/>
            <person name="Nguyen M."/>
            <person name="Pham P.K."/>
            <person name="Cheuk R.F."/>
            <person name="Karlin-Newmann G."/>
            <person name="Liu S.X."/>
            <person name="Lam B."/>
            <person name="Sakano H."/>
            <person name="Wu T."/>
            <person name="Yu G."/>
            <person name="Miranda M."/>
            <person name="Quach H.L."/>
            <person name="Tripp M."/>
            <person name="Chang C.H."/>
            <person name="Lee J.M."/>
            <person name="Toriumi M.J."/>
            <person name="Chan M.M."/>
            <person name="Tang C.C."/>
            <person name="Onodera C.S."/>
            <person name="Deng J.M."/>
            <person name="Akiyama K."/>
            <person name="Ansari Y."/>
            <person name="Arakawa T."/>
            <person name="Banh J."/>
            <person name="Banno F."/>
            <person name="Bowser L."/>
            <person name="Brooks S.Y."/>
            <person name="Carninci P."/>
            <person name="Chao Q."/>
            <person name="Choy N."/>
            <person name="Enju A."/>
            <person name="Goldsmith A.D."/>
            <person name="Gurjal M."/>
            <person name="Hansen N.F."/>
            <person name="Hayashizaki Y."/>
            <person name="Johnson-Hopson C."/>
            <person name="Hsuan V.W."/>
            <person name="Iida K."/>
            <person name="Karnes M."/>
            <person name="Khan S."/>
            <person name="Koesema E."/>
            <person name="Ishida J."/>
            <person name="Jiang P.X."/>
            <person name="Jones T."/>
            <person name="Kawai J."/>
            <person name="Kamiya A."/>
            <person name="Meyers C."/>
            <person name="Nakajima M."/>
            <person name="Narusaka M."/>
            <person name="Seki M."/>
            <person name="Sakurai T."/>
            <person name="Satou M."/>
            <person name="Tamse R."/>
            <person name="Vaysberg M."/>
            <person name="Wallender E.K."/>
            <person name="Wong C."/>
            <person name="Yamamura Y."/>
            <person name="Yuan S."/>
            <person name="Shinozaki K."/>
            <person name="Davis R.W."/>
            <person name="Theologis A."/>
            <person name="Ecker J.R."/>
        </authorList>
    </citation>
    <scope>NUCLEOTIDE SEQUENCE [LARGE SCALE MRNA]</scope>
    <source>
        <strain>cv. Columbia</strain>
    </source>
</reference>
<reference key="4">
    <citation type="submission" date="2002-03" db="EMBL/GenBank/DDBJ databases">
        <title>Full-length cDNA from Arabidopsis thaliana.</title>
        <authorList>
            <person name="Brover V.V."/>
            <person name="Troukhan M.E."/>
            <person name="Alexandrov N.A."/>
            <person name="Lu Y.-P."/>
            <person name="Flavell R.B."/>
            <person name="Feldmann K.A."/>
        </authorList>
    </citation>
    <scope>NUCLEOTIDE SEQUENCE [LARGE SCALE MRNA]</scope>
</reference>
<gene>
    <name type="ordered locus">At1g04970</name>
    <name type="ORF">F13M7.4</name>
</gene>
<accession>Q9MAU5</accession>
<accession>Q8LAL8</accession>
<organism>
    <name type="scientific">Arabidopsis thaliana</name>
    <name type="common">Mouse-ear cress</name>
    <dbReference type="NCBI Taxonomy" id="3702"/>
    <lineage>
        <taxon>Eukaryota</taxon>
        <taxon>Viridiplantae</taxon>
        <taxon>Streptophyta</taxon>
        <taxon>Embryophyta</taxon>
        <taxon>Tracheophyta</taxon>
        <taxon>Spermatophyta</taxon>
        <taxon>Magnoliopsida</taxon>
        <taxon>eudicotyledons</taxon>
        <taxon>Gunneridae</taxon>
        <taxon>Pentapetalae</taxon>
        <taxon>rosids</taxon>
        <taxon>malvids</taxon>
        <taxon>Brassicales</taxon>
        <taxon>Brassicaceae</taxon>
        <taxon>Camelineae</taxon>
        <taxon>Arabidopsis</taxon>
    </lineage>
</organism>
<proteinExistence type="evidence at transcript level"/>
<feature type="signal peptide" evidence="1">
    <location>
        <begin position="1"/>
        <end position="24"/>
    </location>
</feature>
<feature type="chain" id="PRO_0000415535" description="Putative BPI/LBP family protein At1g04970">
    <location>
        <begin position="25"/>
        <end position="488"/>
    </location>
</feature>
<feature type="glycosylation site" description="N-linked (GlcNAc...) asparagine" evidence="1">
    <location>
        <position position="79"/>
    </location>
</feature>
<feature type="glycosylation site" description="N-linked (GlcNAc...) asparagine" evidence="1">
    <location>
        <position position="109"/>
    </location>
</feature>
<feature type="glycosylation site" description="N-linked (GlcNAc...) asparagine" evidence="1">
    <location>
        <position position="231"/>
    </location>
</feature>
<feature type="glycosylation site" description="N-linked (GlcNAc...) asparagine" evidence="1">
    <location>
        <position position="242"/>
    </location>
</feature>
<feature type="glycosylation site" description="N-linked (GlcNAc...) asparagine" evidence="1">
    <location>
        <position position="341"/>
    </location>
</feature>
<feature type="sequence conflict" description="In Ref. 4; AAM65272." evidence="2" ref="4">
    <original>S</original>
    <variation>N</variation>
    <location>
        <position position="217"/>
    </location>
</feature>
<sequence length="488" mass="53493">MDVGRCFLFLLLPSFFFLPSQTQSTDSFTSVLVSQNGLDFVKNLLVNKAIASIIPLQIPRIEKSMKIPFLGGIDVVVSNLTIYELDVASSYVKLGETGVVIVASGTTCNLSMNWHYSYSTWLPPIEISDQGIASVQVQGMEIGLSLGLKSDEGGLKLSLSECGCHVEDITIELEGGASWFYQGMVNAFKDQIGSSVESTIAKKLTEGVSDLDSFLQSLPKEIPVDDNADLNVTFTSDPILRNSSITFEIDGLFTKGETNQVLKSFFKKSVSLVICPGNSKMLGISVDEAVFNSAAALYYNADFVQWVVDKIPEQSLLNTARWRFIIPQLYKKYPNQDMNLNISLSSPPLVKISEQYVGANVNADLVINVLDANQVIPVACISLMIRGSGALRVMGNNLGGSVSLEDFSMSLKWSNIGNLHLHLLQPIVWTVIQTVFVPYANDHLEKGFPLPIMHGFTLQNAEIICSESEITVCSDVAYLDSSQQPQWL</sequence>